<dbReference type="EC" id="2.3.1.-" evidence="2"/>
<dbReference type="EMBL" id="BA000018">
    <property type="protein sequence ID" value="BAB43658.1"/>
    <property type="molecule type" value="Genomic_DNA"/>
</dbReference>
<dbReference type="PIR" id="H90061">
    <property type="entry name" value="H90061"/>
</dbReference>
<dbReference type="RefSeq" id="WP_000379821.1">
    <property type="nucleotide sequence ID" value="NC_002745.2"/>
</dbReference>
<dbReference type="SMR" id="Q7A3D6"/>
<dbReference type="EnsemblBacteria" id="BAB43658">
    <property type="protein sequence ID" value="BAB43658"/>
    <property type="gene ID" value="BAB43658"/>
</dbReference>
<dbReference type="KEGG" id="sau:SA2354"/>
<dbReference type="HOGENOM" id="CLU_005679_11_2_9"/>
<dbReference type="GO" id="GO:0005886">
    <property type="term" value="C:plasma membrane"/>
    <property type="evidence" value="ECO:0007669"/>
    <property type="project" value="UniProtKB-SubCell"/>
</dbReference>
<dbReference type="GO" id="GO:0016747">
    <property type="term" value="F:acyltransferase activity, transferring groups other than amino-acyl groups"/>
    <property type="evidence" value="ECO:0007669"/>
    <property type="project" value="InterPro"/>
</dbReference>
<dbReference type="GO" id="GO:0009103">
    <property type="term" value="P:lipopolysaccharide biosynthetic process"/>
    <property type="evidence" value="ECO:0007669"/>
    <property type="project" value="TreeGrafter"/>
</dbReference>
<dbReference type="CDD" id="cd01840">
    <property type="entry name" value="SGNH_hydrolase_yrhL_like"/>
    <property type="match status" value="1"/>
</dbReference>
<dbReference type="FunFam" id="3.40.50.1110:FF:000006">
    <property type="entry name" value="O-acetyltransferase OatA"/>
    <property type="match status" value="1"/>
</dbReference>
<dbReference type="Gene3D" id="3.40.50.1110">
    <property type="entry name" value="SGNH hydrolase"/>
    <property type="match status" value="1"/>
</dbReference>
<dbReference type="InterPro" id="IPR002656">
    <property type="entry name" value="Acyl_transf_3_dom"/>
</dbReference>
<dbReference type="InterPro" id="IPR050879">
    <property type="entry name" value="Acyltransferase_3"/>
</dbReference>
<dbReference type="InterPro" id="IPR036514">
    <property type="entry name" value="SGNH_hydro_sf"/>
</dbReference>
<dbReference type="PANTHER" id="PTHR23028">
    <property type="entry name" value="ACETYLTRANSFERASE"/>
    <property type="match status" value="1"/>
</dbReference>
<dbReference type="PANTHER" id="PTHR23028:SF53">
    <property type="entry name" value="ACYL_TRANSF_3 DOMAIN-CONTAINING PROTEIN"/>
    <property type="match status" value="1"/>
</dbReference>
<dbReference type="Pfam" id="PF01757">
    <property type="entry name" value="Acyl_transf_3"/>
    <property type="match status" value="1"/>
</dbReference>
<dbReference type="SUPFAM" id="SSF52266">
    <property type="entry name" value="SGNH hydrolase"/>
    <property type="match status" value="1"/>
</dbReference>
<accession>Q7A3D6</accession>
<name>OATA_STAAN</name>
<gene>
    <name type="primary">oatA</name>
    <name type="ordered locus">SA2354</name>
</gene>
<organism>
    <name type="scientific">Staphylococcus aureus (strain N315)</name>
    <dbReference type="NCBI Taxonomy" id="158879"/>
    <lineage>
        <taxon>Bacteria</taxon>
        <taxon>Bacillati</taxon>
        <taxon>Bacillota</taxon>
        <taxon>Bacilli</taxon>
        <taxon>Bacillales</taxon>
        <taxon>Staphylococcaceae</taxon>
        <taxon>Staphylococcus</taxon>
    </lineage>
</organism>
<feature type="chain" id="PRO_0000208087" description="O-acetyltransferase OatA">
    <location>
        <begin position="1"/>
        <end position="603"/>
    </location>
</feature>
<feature type="transmembrane region" description="Helical" evidence="3">
    <location>
        <begin position="17"/>
        <end position="37"/>
    </location>
</feature>
<feature type="transmembrane region" description="Helical" evidence="3">
    <location>
        <begin position="45"/>
        <end position="65"/>
    </location>
</feature>
<feature type="transmembrane region" description="Helical" evidence="3">
    <location>
        <begin position="87"/>
        <end position="107"/>
    </location>
</feature>
<feature type="transmembrane region" description="Helical" evidence="3">
    <location>
        <begin position="148"/>
        <end position="168"/>
    </location>
</feature>
<feature type="transmembrane region" description="Helical" evidence="3">
    <location>
        <begin position="177"/>
        <end position="197"/>
    </location>
</feature>
<feature type="transmembrane region" description="Helical" evidence="3">
    <location>
        <begin position="211"/>
        <end position="231"/>
    </location>
</feature>
<feature type="transmembrane region" description="Helical" evidence="3">
    <location>
        <begin position="239"/>
        <end position="259"/>
    </location>
</feature>
<feature type="transmembrane region" description="Helical" evidence="3">
    <location>
        <begin position="268"/>
        <end position="288"/>
    </location>
</feature>
<feature type="transmembrane region" description="Helical" evidence="3">
    <location>
        <begin position="311"/>
        <end position="331"/>
    </location>
</feature>
<feature type="transmembrane region" description="Helical" evidence="3">
    <location>
        <begin position="333"/>
        <end position="353"/>
    </location>
</feature>
<feature type="transmembrane region" description="Helical" evidence="3">
    <location>
        <begin position="382"/>
        <end position="402"/>
    </location>
</feature>
<feature type="active site" evidence="2">
    <location>
        <position position="453"/>
    </location>
</feature>
<feature type="active site" evidence="2">
    <location>
        <position position="575"/>
    </location>
</feature>
<feature type="active site" evidence="2">
    <location>
        <position position="578"/>
    </location>
</feature>
<keyword id="KW-0012">Acyltransferase</keyword>
<keyword id="KW-1003">Cell membrane</keyword>
<keyword id="KW-0472">Membrane</keyword>
<keyword id="KW-0808">Transferase</keyword>
<keyword id="KW-0812">Transmembrane</keyword>
<keyword id="KW-1133">Transmembrane helix</keyword>
<evidence type="ECO:0000250" key="1"/>
<evidence type="ECO:0000250" key="2">
    <source>
        <dbReference type="UniProtKB" id="Q2FV54"/>
    </source>
</evidence>
<evidence type="ECO:0000255" key="3"/>
<evidence type="ECO:0000305" key="4"/>
<protein>
    <recommendedName>
        <fullName>O-acetyltransferase OatA</fullName>
        <ecNumber evidence="2">2.3.1.-</ecNumber>
    </recommendedName>
</protein>
<sequence length="603" mass="69099">MDTKDFKRLEKMYSPRYLPGLDGLRAFAVIGIIIYHLNAQWLSGGFLGVDTFFVISGYLITSLLISEYYRTQKIDLLEFWKRRLKRLIPAVLFLICVVLTFTLIFKPELIIQMKRDAIAAIFYVSNWWYISQNVDYFNQFAIEPLKHLWSLAIEEQFYLLFPLVITFLLHRFKPRNIIQTLFIVSLISLGLMIVIHFITGDNSRVYFGTDTRLQTLLLGCILAFIWPPFALKKDISKKIVVSLDIIGISGFAVLMTLFFIVGDQDQWIYNGGFYIISFATLFIIAIAVHPSSLFAKFLSMKPLLIIGKRSYSLYLWHYPIIVFVNSYYVQGQIPVYVYIIEILLTALMAEISYRFIETPIRKKGFKAFAFLPKKKGQFARTVLVILLLVPSIVVLSGQFDALGKQHEAEKKEKKTEFKTTKKKVVKKDKQEDKQTANSKEDIKKSSPLLIGDSVMVDIGNVFTKKIPNAQIDGKVGRQLVDATPIVKSQYKDYAKKGQKVVVELGTNGAFTKDQLNELLDSFGKADIYLVSIRVPRDYEGRINKLIYEAAEKRSNVHLVDWYKASAGHPEYFAYDGIHLEYAGSKALTDLIVKTMETHATNKK</sequence>
<reference key="1">
    <citation type="journal article" date="2001" name="Lancet">
        <title>Whole genome sequencing of meticillin-resistant Staphylococcus aureus.</title>
        <authorList>
            <person name="Kuroda M."/>
            <person name="Ohta T."/>
            <person name="Uchiyama I."/>
            <person name="Baba T."/>
            <person name="Yuzawa H."/>
            <person name="Kobayashi I."/>
            <person name="Cui L."/>
            <person name="Oguchi A."/>
            <person name="Aoki K."/>
            <person name="Nagai Y."/>
            <person name="Lian J.-Q."/>
            <person name="Ito T."/>
            <person name="Kanamori M."/>
            <person name="Matsumaru H."/>
            <person name="Maruyama A."/>
            <person name="Murakami H."/>
            <person name="Hosoyama A."/>
            <person name="Mizutani-Ui Y."/>
            <person name="Takahashi N.K."/>
            <person name="Sawano T."/>
            <person name="Inoue R."/>
            <person name="Kaito C."/>
            <person name="Sekimizu K."/>
            <person name="Hirakawa H."/>
            <person name="Kuhara S."/>
            <person name="Goto S."/>
            <person name="Yabuzaki J."/>
            <person name="Kanehisa M."/>
            <person name="Yamashita A."/>
            <person name="Oshima K."/>
            <person name="Furuya K."/>
            <person name="Yoshino C."/>
            <person name="Shiba T."/>
            <person name="Hattori M."/>
            <person name="Ogasawara N."/>
            <person name="Hayashi H."/>
            <person name="Hiramatsu K."/>
        </authorList>
    </citation>
    <scope>NUCLEOTIDE SEQUENCE [LARGE SCALE GENOMIC DNA]</scope>
    <source>
        <strain>N315</strain>
    </source>
</reference>
<reference key="2">
    <citation type="submission" date="2007-10" db="UniProtKB">
        <title>Shotgun proteomic analysis of total and membrane protein extracts of S. aureus strain N315.</title>
        <authorList>
            <person name="Vaezzadeh A.R."/>
            <person name="Deshusses J."/>
            <person name="Lescuyer P."/>
            <person name="Hochstrasser D.F."/>
        </authorList>
    </citation>
    <scope>IDENTIFICATION BY MASS SPECTROMETRY [LARGE SCALE ANALYSIS]</scope>
    <source>
        <strain>N315</strain>
    </source>
</reference>
<proteinExistence type="evidence at protein level"/>
<comment type="function">
    <text evidence="2">Responsible for O-acetylation at the C(6)-hydroxyl group of N-acetylmuramyl residues, forming the corresponding N,6-O-diacetylmuramic acid of the peptidoglycan. O-acetylation of the peptidoglycan is the major determinant for lysozyme resistance.</text>
</comment>
<comment type="subcellular location">
    <subcellularLocation>
        <location evidence="1">Cell membrane</location>
        <topology evidence="1">Multi-pass membrane protein</topology>
    </subcellularLocation>
</comment>
<comment type="similarity">
    <text evidence="4">Belongs to the acyltransferase 3 family.</text>
</comment>